<comment type="function">
    <text evidence="4 6 8 10 11">Vesicle trafficking protein that functions in the secretory pathway; the fusion of phospholipid vesicles containing SYP61 and VTI12 is triggered by YKT61 and YKT62 (PubMed:15919093, PubMed:21826108). Together with VTI12, required for membrane fusion (PubMed:15919093). Involved in osmotic stress tolerance and in abscisic acid (ABA) regulation of stomatal responses (PubMed:12468724). Plays a role in the exocytic trafficking of cellulose synthases (CESAs) and the transport of cell wall components to the plasma membrane (PubMed:21826108, PubMed:25535279). Together with SYP121, regulates the post-Golgi trafficking of the aquaporin PIP2-7 to the plasma membrane, thus modulating cell membrane water permeability (PubMed:25082856).</text>
</comment>
<comment type="subunit">
    <text evidence="3 6 8 10">Interacts with VTI12 and either SYP41, SYP42 or SYP51 in the trans-Golgi network or with VTI11 and SYP51 in the prevacuolar compartment to form t-SNARE complexes (PubMed:11739776, PubMed:15919093, PubMed:21826108). Core constituent of the SNARE complex required for membrane fusion at the trans-Golgi network (PubMed:15919093, PubMed:21826108). Also observed in the SYP121-complex and cellulose synthases (PubMed:21826108). Colocalizes with PIP2-7 and SYP121 in trafficking vesicles and at the plasma membrane (PubMed:25082856). Interacts with SYP121 and PIP2-7 (PubMed:25082856).</text>
</comment>
<comment type="interaction">
    <interactant intactId="EBI-4438441">
        <id>Q946Y7</id>
    </interactant>
    <interactant intactId="EBI-4436558">
        <id>Q9SA23</id>
        <label>SYP51</label>
    </interactant>
    <organismsDiffer>false</organismsDiffer>
    <experiments>2</experiments>
</comment>
<comment type="subcellular location">
    <subcellularLocation>
        <location evidence="3 5 8 9 10">Golgi apparatus</location>
        <location evidence="3 5 8 9 10">trans-Golgi network membrane</location>
        <topology evidence="1">Single-pass type IV membrane protein</topology>
    </subcellularLocation>
    <subcellularLocation>
        <location evidence="9 10">Prevacuolar compartment membrane</location>
        <topology evidence="1">Single-pass type IV membrane protein</topology>
    </subcellularLocation>
    <text evidence="7 9">And along the cell wall inner surface (PubMed:23832588). Intracellular trafficking is modulated by TNO1 (PubMed:21521696).</text>
</comment>
<comment type="alternative products">
    <event type="alternative splicing"/>
    <isoform>
        <id>Q946Y7-1</id>
        <name>1</name>
        <sequence type="displayed"/>
    </isoform>
    <text>A number of isoforms are produced. According to EST sequences.</text>
</comment>
<comment type="tissue specificity">
    <text evidence="4 5 6">Expressed in root, leaf, stem, flower and silique, but not in hypocotyl or young leaf (PubMed:12468724, PubMed:15342965, PubMed:15919093). Strong expression in the vasculature and in guard cells of the leaf epidermis (PubMed:12468724).</text>
</comment>
<comment type="induction">
    <text>Not induced by osmotic stress or ABA treatment.</text>
</comment>
<comment type="disruption phenotype">
    <text evidence="4 10">Abnormally branched root pattern (PubMed:12468724). Hypersensitivity to inhibition by Na(+), K(+) and Li(+) but not Cs(+) (PubMed:12468724). Abnormal PIP2-7 trafficking and subcellular localization leading to a reduced levels at the plasma membrane and abnormal accumulation in globular or lenticular structures (PubMed:25082856).</text>
</comment>
<comment type="miscellaneous">
    <text>The exact location of the SYP51/SYP61 complex is unclear, but is probably on the trans-Golgi network because of the likelihood of containing chiefly VTI12.</text>
</comment>
<comment type="similarity">
    <text evidence="14">Belongs to the syntaxin family.</text>
</comment>
<comment type="sequence caution" evidence="14">
    <conflict type="erroneous gene model prediction">
        <sequence resource="EMBL-CDS" id="AAF16768"/>
    </conflict>
</comment>
<sequence>MSSAQDPFYIVKEEIQDSIDKLQSTFHKWERISPDMGDQAHVAKELVATCGSIEWQVDELEKAITVAAKDPSWYGIDEAELEKRRRWTSNARTQVRNVKSGVLAGKVSSGAGHASEVRRELMRMPNSGEASRYDQYGGRDDDGFVQSESDRQMLLIKQQDEELDELSKSVQRIGGVGLTIHDELVAQERIIDELDTEMDSTKNRLEFVQKKVGMVMKKAGAKGQMMMICFLLVLFIILFVLVFLT</sequence>
<name>SYP61_ARATH</name>
<feature type="chain" id="PRO_0000210263" description="Syntaxin-61">
    <location>
        <begin position="1"/>
        <end position="245"/>
    </location>
</feature>
<feature type="topological domain" description="Cytoplasmic" evidence="1">
    <location>
        <begin position="1"/>
        <end position="224"/>
    </location>
</feature>
<feature type="transmembrane region" description="Helical; Anchor for type IV membrane protein" evidence="1">
    <location>
        <begin position="225"/>
        <end position="245"/>
    </location>
</feature>
<feature type="domain" description="t-SNARE coiled-coil homology" evidence="2">
    <location>
        <begin position="153"/>
        <end position="215"/>
    </location>
</feature>
<feature type="sequence conflict" description="In Ref. 4; AAL59937." evidence="14" ref="4">
    <original>V</original>
    <variation>I</variation>
    <location>
        <position position="240"/>
    </location>
</feature>
<dbReference type="EMBL" id="AF355754">
    <property type="protein sequence ID" value="AAK40222.2"/>
    <property type="molecule type" value="mRNA"/>
</dbReference>
<dbReference type="EMBL" id="AC010155">
    <property type="protein sequence ID" value="AAF16768.1"/>
    <property type="status" value="ALT_SEQ"/>
    <property type="molecule type" value="Genomic_DNA"/>
</dbReference>
<dbReference type="EMBL" id="CP002684">
    <property type="protein sequence ID" value="AEE30982.1"/>
    <property type="molecule type" value="Genomic_DNA"/>
</dbReference>
<dbReference type="EMBL" id="AY150420">
    <property type="protein sequence ID" value="AAN12965.1"/>
    <property type="molecule type" value="mRNA"/>
</dbReference>
<dbReference type="EMBL" id="AY072115">
    <property type="protein sequence ID" value="AAL59937.1"/>
    <property type="molecule type" value="mRNA"/>
</dbReference>
<dbReference type="RefSeq" id="NP_564310.1">
    <molecule id="Q946Y7-1"/>
    <property type="nucleotide sequence ID" value="NM_102617.4"/>
</dbReference>
<dbReference type="SMR" id="Q946Y7"/>
<dbReference type="BioGRID" id="24984">
    <property type="interactions" value="13"/>
</dbReference>
<dbReference type="FunCoup" id="Q946Y7">
    <property type="interactions" value="3573"/>
</dbReference>
<dbReference type="IntAct" id="Q946Y7">
    <property type="interactions" value="7"/>
</dbReference>
<dbReference type="STRING" id="3702.Q946Y7"/>
<dbReference type="iPTMnet" id="Q946Y7"/>
<dbReference type="PaxDb" id="3702-AT1G28490.1"/>
<dbReference type="ProteomicsDB" id="228486">
    <molecule id="Q946Y7-1"/>
</dbReference>
<dbReference type="EnsemblPlants" id="AT1G28490.1">
    <molecule id="Q946Y7-1"/>
    <property type="protein sequence ID" value="AT1G28490.1"/>
    <property type="gene ID" value="AT1G28490"/>
</dbReference>
<dbReference type="GeneID" id="839749"/>
<dbReference type="Gramene" id="AT1G28490.1">
    <molecule id="Q946Y7-1"/>
    <property type="protein sequence ID" value="AT1G28490.1"/>
    <property type="gene ID" value="AT1G28490"/>
</dbReference>
<dbReference type="KEGG" id="ath:AT1G28490"/>
<dbReference type="Araport" id="AT1G28490"/>
<dbReference type="TAIR" id="AT1G28490">
    <property type="gene designation" value="SYP61"/>
</dbReference>
<dbReference type="eggNOG" id="KOG3202">
    <property type="taxonomic scope" value="Eukaryota"/>
</dbReference>
<dbReference type="HOGENOM" id="CLU_061883_3_0_1"/>
<dbReference type="InParanoid" id="Q946Y7"/>
<dbReference type="OMA" id="EHDPYRF"/>
<dbReference type="OrthoDB" id="546861at2759"/>
<dbReference type="PhylomeDB" id="Q946Y7"/>
<dbReference type="PRO" id="PR:Q946Y7"/>
<dbReference type="Proteomes" id="UP000006548">
    <property type="component" value="Chromosome 1"/>
</dbReference>
<dbReference type="ExpressionAtlas" id="Q946Y7">
    <property type="expression patterns" value="baseline and differential"/>
</dbReference>
<dbReference type="GO" id="GO:0031201">
    <property type="term" value="C:SNARE complex"/>
    <property type="evidence" value="ECO:0000314"/>
    <property type="project" value="UniProtKB"/>
</dbReference>
<dbReference type="GO" id="GO:0005802">
    <property type="term" value="C:trans-Golgi network"/>
    <property type="evidence" value="ECO:0000314"/>
    <property type="project" value="TAIR"/>
</dbReference>
<dbReference type="GO" id="GO:0032588">
    <property type="term" value="C:trans-Golgi network membrane"/>
    <property type="evidence" value="ECO:0000314"/>
    <property type="project" value="UniProtKB"/>
</dbReference>
<dbReference type="GO" id="GO:0005484">
    <property type="term" value="F:SNAP receptor activity"/>
    <property type="evidence" value="ECO:0000304"/>
    <property type="project" value="TAIR"/>
</dbReference>
<dbReference type="GO" id="GO:0009738">
    <property type="term" value="P:abscisic acid-activated signaling pathway"/>
    <property type="evidence" value="ECO:0007669"/>
    <property type="project" value="UniProtKB-KW"/>
</dbReference>
<dbReference type="GO" id="GO:0006887">
    <property type="term" value="P:exocytosis"/>
    <property type="evidence" value="ECO:0000314"/>
    <property type="project" value="UniProtKB"/>
</dbReference>
<dbReference type="GO" id="GO:0048193">
    <property type="term" value="P:Golgi vesicle transport"/>
    <property type="evidence" value="ECO:0007669"/>
    <property type="project" value="InterPro"/>
</dbReference>
<dbReference type="GO" id="GO:0006886">
    <property type="term" value="P:intracellular protein transport"/>
    <property type="evidence" value="ECO:0000314"/>
    <property type="project" value="UniProtKB"/>
</dbReference>
<dbReference type="GO" id="GO:0052324">
    <property type="term" value="P:plant-type cell wall cellulose biosynthetic process"/>
    <property type="evidence" value="ECO:0000314"/>
    <property type="project" value="UniProtKB"/>
</dbReference>
<dbReference type="GO" id="GO:0006906">
    <property type="term" value="P:vesicle fusion"/>
    <property type="evidence" value="ECO:0000314"/>
    <property type="project" value="UniProtKB"/>
</dbReference>
<dbReference type="CDD" id="cd21445">
    <property type="entry name" value="SNARE_NTD_AtSYP61-like"/>
    <property type="match status" value="1"/>
</dbReference>
<dbReference type="CDD" id="cd15841">
    <property type="entry name" value="SNARE_Qc"/>
    <property type="match status" value="1"/>
</dbReference>
<dbReference type="FunFam" id="1.20.58.90:FF:000004">
    <property type="entry name" value="Syntaxin 10"/>
    <property type="match status" value="1"/>
</dbReference>
<dbReference type="FunFam" id="1.20.5.110:FF:000034">
    <property type="entry name" value="syntaxin-61 isoform X1"/>
    <property type="match status" value="1"/>
</dbReference>
<dbReference type="Gene3D" id="1.20.5.110">
    <property type="match status" value="1"/>
</dbReference>
<dbReference type="Gene3D" id="1.20.58.90">
    <property type="match status" value="1"/>
</dbReference>
<dbReference type="InterPro" id="IPR010989">
    <property type="entry name" value="SNARE"/>
</dbReference>
<dbReference type="InterPro" id="IPR015260">
    <property type="entry name" value="Syntaxin-6/10/61_N"/>
</dbReference>
<dbReference type="InterPro" id="IPR006012">
    <property type="entry name" value="Syntaxin/epimorphin_CS"/>
</dbReference>
<dbReference type="InterPro" id="IPR000727">
    <property type="entry name" value="T_SNARE_dom"/>
</dbReference>
<dbReference type="PANTHER" id="PTHR12791">
    <property type="entry name" value="GOLGI SNARE BET1-RELATED"/>
    <property type="match status" value="1"/>
</dbReference>
<dbReference type="Pfam" id="PF05739">
    <property type="entry name" value="SNARE"/>
    <property type="match status" value="1"/>
</dbReference>
<dbReference type="Pfam" id="PF09177">
    <property type="entry name" value="STX6_10_61_N"/>
    <property type="match status" value="1"/>
</dbReference>
<dbReference type="SMART" id="SM00397">
    <property type="entry name" value="t_SNARE"/>
    <property type="match status" value="1"/>
</dbReference>
<dbReference type="SUPFAM" id="SSF58038">
    <property type="entry name" value="SNARE fusion complex"/>
    <property type="match status" value="1"/>
</dbReference>
<dbReference type="SUPFAM" id="SSF47661">
    <property type="entry name" value="t-snare proteins"/>
    <property type="match status" value="1"/>
</dbReference>
<dbReference type="PROSITE" id="PS00914">
    <property type="entry name" value="SYNTAXIN"/>
    <property type="match status" value="1"/>
</dbReference>
<dbReference type="PROSITE" id="PS50192">
    <property type="entry name" value="T_SNARE"/>
    <property type="match status" value="1"/>
</dbReference>
<organism>
    <name type="scientific">Arabidopsis thaliana</name>
    <name type="common">Mouse-ear cress</name>
    <dbReference type="NCBI Taxonomy" id="3702"/>
    <lineage>
        <taxon>Eukaryota</taxon>
        <taxon>Viridiplantae</taxon>
        <taxon>Streptophyta</taxon>
        <taxon>Embryophyta</taxon>
        <taxon>Tracheophyta</taxon>
        <taxon>Spermatophyta</taxon>
        <taxon>Magnoliopsida</taxon>
        <taxon>eudicotyledons</taxon>
        <taxon>Gunneridae</taxon>
        <taxon>Pentapetalae</taxon>
        <taxon>rosids</taxon>
        <taxon>malvids</taxon>
        <taxon>Brassicales</taxon>
        <taxon>Brassicaceae</taxon>
        <taxon>Camelineae</taxon>
        <taxon>Arabidopsis</taxon>
    </lineage>
</organism>
<protein>
    <recommendedName>
        <fullName evidence="12">Syntaxin-61</fullName>
        <shortName evidence="12">AtSYP61</shortName>
    </recommendedName>
    <alternativeName>
        <fullName evidence="13">Osmotic stress-sensitive mutant 1</fullName>
    </alternativeName>
    <alternativeName>
        <fullName evidence="12">Protein SYNTAXIN OF PLANTS 61</fullName>
    </alternativeName>
</protein>
<keyword id="KW-0938">Abscisic acid signaling pathway</keyword>
<keyword id="KW-0025">Alternative splicing</keyword>
<keyword id="KW-0903">Direct protein sequencing</keyword>
<keyword id="KW-0333">Golgi apparatus</keyword>
<keyword id="KW-0472">Membrane</keyword>
<keyword id="KW-0653">Protein transport</keyword>
<keyword id="KW-1185">Reference proteome</keyword>
<keyword id="KW-0812">Transmembrane</keyword>
<keyword id="KW-1133">Transmembrane helix</keyword>
<keyword id="KW-0813">Transport</keyword>
<reference key="1">
    <citation type="journal article" date="2001" name="Mol. Biol. Cell">
        <title>Interactions between syntaxins identify at least five SNARE complexes within the Golgi/prevacuolar system of the Arabidopsis cell.</title>
        <authorList>
            <person name="Sanderfoot A.A."/>
            <person name="Kovaleva V."/>
            <person name="Bassham D.C."/>
            <person name="Raikhel N.V."/>
        </authorList>
    </citation>
    <scope>NUCLEOTIDE SEQUENCE [MRNA]</scope>
    <scope>PROTEIN SEQUENCE OF 173-189</scope>
    <scope>INTERACTION WITH SYP41; SYP42; SYP51; VTI11 AND VTI12</scope>
    <scope>SUBCELLULAR LOCATION</scope>
</reference>
<reference key="2">
    <citation type="journal article" date="2000" name="Nature">
        <title>Sequence and analysis of chromosome 1 of the plant Arabidopsis thaliana.</title>
        <authorList>
            <person name="Theologis A."/>
            <person name="Ecker J.R."/>
            <person name="Palm C.J."/>
            <person name="Federspiel N.A."/>
            <person name="Kaul S."/>
            <person name="White O."/>
            <person name="Alonso J."/>
            <person name="Altafi H."/>
            <person name="Araujo R."/>
            <person name="Bowman C.L."/>
            <person name="Brooks S.Y."/>
            <person name="Buehler E."/>
            <person name="Chan A."/>
            <person name="Chao Q."/>
            <person name="Chen H."/>
            <person name="Cheuk R.F."/>
            <person name="Chin C.W."/>
            <person name="Chung M.K."/>
            <person name="Conn L."/>
            <person name="Conway A.B."/>
            <person name="Conway A.R."/>
            <person name="Creasy T.H."/>
            <person name="Dewar K."/>
            <person name="Dunn P."/>
            <person name="Etgu P."/>
            <person name="Feldblyum T.V."/>
            <person name="Feng J.-D."/>
            <person name="Fong B."/>
            <person name="Fujii C.Y."/>
            <person name="Gill J.E."/>
            <person name="Goldsmith A.D."/>
            <person name="Haas B."/>
            <person name="Hansen N.F."/>
            <person name="Hughes B."/>
            <person name="Huizar L."/>
            <person name="Hunter J.L."/>
            <person name="Jenkins J."/>
            <person name="Johnson-Hopson C."/>
            <person name="Khan S."/>
            <person name="Khaykin E."/>
            <person name="Kim C.J."/>
            <person name="Koo H.L."/>
            <person name="Kremenetskaia I."/>
            <person name="Kurtz D.B."/>
            <person name="Kwan A."/>
            <person name="Lam B."/>
            <person name="Langin-Hooper S."/>
            <person name="Lee A."/>
            <person name="Lee J.M."/>
            <person name="Lenz C.A."/>
            <person name="Li J.H."/>
            <person name="Li Y.-P."/>
            <person name="Lin X."/>
            <person name="Liu S.X."/>
            <person name="Liu Z.A."/>
            <person name="Luros J.S."/>
            <person name="Maiti R."/>
            <person name="Marziali A."/>
            <person name="Militscher J."/>
            <person name="Miranda M."/>
            <person name="Nguyen M."/>
            <person name="Nierman W.C."/>
            <person name="Osborne B.I."/>
            <person name="Pai G."/>
            <person name="Peterson J."/>
            <person name="Pham P.K."/>
            <person name="Rizzo M."/>
            <person name="Rooney T."/>
            <person name="Rowley D."/>
            <person name="Sakano H."/>
            <person name="Salzberg S.L."/>
            <person name="Schwartz J.R."/>
            <person name="Shinn P."/>
            <person name="Southwick A.M."/>
            <person name="Sun H."/>
            <person name="Tallon L.J."/>
            <person name="Tambunga G."/>
            <person name="Toriumi M.J."/>
            <person name="Town C.D."/>
            <person name="Utterback T."/>
            <person name="Van Aken S."/>
            <person name="Vaysberg M."/>
            <person name="Vysotskaia V.S."/>
            <person name="Walker M."/>
            <person name="Wu D."/>
            <person name="Yu G."/>
            <person name="Fraser C.M."/>
            <person name="Venter J.C."/>
            <person name="Davis R.W."/>
        </authorList>
    </citation>
    <scope>NUCLEOTIDE SEQUENCE [LARGE SCALE GENOMIC DNA]</scope>
    <source>
        <strain>cv. Columbia</strain>
    </source>
</reference>
<reference key="3">
    <citation type="journal article" date="2017" name="Plant J.">
        <title>Araport11: a complete reannotation of the Arabidopsis thaliana reference genome.</title>
        <authorList>
            <person name="Cheng C.Y."/>
            <person name="Krishnakumar V."/>
            <person name="Chan A.P."/>
            <person name="Thibaud-Nissen F."/>
            <person name="Schobel S."/>
            <person name="Town C.D."/>
        </authorList>
    </citation>
    <scope>GENOME REANNOTATION</scope>
    <source>
        <strain>cv. Columbia</strain>
    </source>
</reference>
<reference key="4">
    <citation type="journal article" date="2003" name="Science">
        <title>Empirical analysis of transcriptional activity in the Arabidopsis genome.</title>
        <authorList>
            <person name="Yamada K."/>
            <person name="Lim J."/>
            <person name="Dale J.M."/>
            <person name="Chen H."/>
            <person name="Shinn P."/>
            <person name="Palm C.J."/>
            <person name="Southwick A.M."/>
            <person name="Wu H.C."/>
            <person name="Kim C.J."/>
            <person name="Nguyen M."/>
            <person name="Pham P.K."/>
            <person name="Cheuk R.F."/>
            <person name="Karlin-Newmann G."/>
            <person name="Liu S.X."/>
            <person name="Lam B."/>
            <person name="Sakano H."/>
            <person name="Wu T."/>
            <person name="Yu G."/>
            <person name="Miranda M."/>
            <person name="Quach H.L."/>
            <person name="Tripp M."/>
            <person name="Chang C.H."/>
            <person name="Lee J.M."/>
            <person name="Toriumi M.J."/>
            <person name="Chan M.M."/>
            <person name="Tang C.C."/>
            <person name="Onodera C.S."/>
            <person name="Deng J.M."/>
            <person name="Akiyama K."/>
            <person name="Ansari Y."/>
            <person name="Arakawa T."/>
            <person name="Banh J."/>
            <person name="Banno F."/>
            <person name="Bowser L."/>
            <person name="Brooks S.Y."/>
            <person name="Carninci P."/>
            <person name="Chao Q."/>
            <person name="Choy N."/>
            <person name="Enju A."/>
            <person name="Goldsmith A.D."/>
            <person name="Gurjal M."/>
            <person name="Hansen N.F."/>
            <person name="Hayashizaki Y."/>
            <person name="Johnson-Hopson C."/>
            <person name="Hsuan V.W."/>
            <person name="Iida K."/>
            <person name="Karnes M."/>
            <person name="Khan S."/>
            <person name="Koesema E."/>
            <person name="Ishida J."/>
            <person name="Jiang P.X."/>
            <person name="Jones T."/>
            <person name="Kawai J."/>
            <person name="Kamiya A."/>
            <person name="Meyers C."/>
            <person name="Nakajima M."/>
            <person name="Narusaka M."/>
            <person name="Seki M."/>
            <person name="Sakurai T."/>
            <person name="Satou M."/>
            <person name="Tamse R."/>
            <person name="Vaysberg M."/>
            <person name="Wallender E.K."/>
            <person name="Wong C."/>
            <person name="Yamamura Y."/>
            <person name="Yuan S."/>
            <person name="Shinozaki K."/>
            <person name="Davis R.W."/>
            <person name="Theologis A."/>
            <person name="Ecker J.R."/>
        </authorList>
    </citation>
    <scope>NUCLEOTIDE SEQUENCE [LARGE SCALE MRNA]</scope>
    <source>
        <strain>cv. Columbia</strain>
    </source>
</reference>
<reference key="5">
    <citation type="journal article" date="2002" name="Plant Cell">
        <title>OSM1/SYP61: a syntaxin protein in Arabidopsis controls abscisic acid-mediated and non-abscisic acid-mediated responses to abiotic stress.</title>
        <authorList>
            <person name="Zhu J."/>
            <person name="Gong Z."/>
            <person name="Zhang C."/>
            <person name="Song C.-P."/>
            <person name="Damsz B."/>
            <person name="Inan G."/>
            <person name="Koiwa H."/>
            <person name="Zhu J.-K."/>
            <person name="Hasegawa P.M."/>
            <person name="Bressan R.A."/>
        </authorList>
    </citation>
    <scope>CHARACTERIZATION</scope>
    <scope>FUNCTION</scope>
    <scope>DISRUPTION PHENOTYPE</scope>
    <scope>TISSUE SPECIFICITY</scope>
    <source>
        <strain>cv. C24</strain>
    </source>
</reference>
<reference key="6">
    <citation type="journal article" date="2004" name="Cell Struct. Funct.">
        <title>Systematic analysis of SNARE molecules in Arabidopsis: dissection of the post-Golgi network in plant cells.</title>
        <authorList>
            <person name="Uemura T."/>
            <person name="Ueda T."/>
            <person name="Ohniwa R.L."/>
            <person name="Nakano A."/>
            <person name="Takeyasu K."/>
            <person name="Sato M.H."/>
        </authorList>
    </citation>
    <scope>SUBCELLULAR LOCATION</scope>
    <scope>TISSUE SPECIFICITY</scope>
</reference>
<reference key="7">
    <citation type="journal article" date="2005" name="J. Mol. Biol.">
        <title>YKT6 is a core constituent of membrane fusion machineries at the Arabidopsis trans-Golgi network.</title>
        <authorList>
            <person name="Chen Y."/>
            <person name="Shin Y.-K."/>
            <person name="Bassham D.C."/>
        </authorList>
    </citation>
    <scope>FUNCTION</scope>
    <scope>SUBUNIT</scope>
    <scope>INTERACTION WITH SYP41</scope>
    <scope>TISSUE SPECIFICITY</scope>
</reference>
<reference key="8">
    <citation type="journal article" date="2011" name="Plant Physiol.">
        <title>TNO1 is involved in salt tolerance and vacuolar trafficking in Arabidopsis.</title>
        <authorList>
            <person name="Kim S.-J."/>
            <person name="Bassham D.C."/>
        </authorList>
    </citation>
    <scope>SUBCELLULAR LOCATION</scope>
</reference>
<reference key="9">
    <citation type="journal article" date="2012" name="Cell Res.">
        <title>Isolation and proteomic analysis of the SYP61 compartment reveal its role in exocytic trafficking in Arabidopsis.</title>
        <authorList>
            <person name="Drakakaki G."/>
            <person name="van de Ven W."/>
            <person name="Pan S."/>
            <person name="Miao Y."/>
            <person name="Wang J."/>
            <person name="Keinath N.F."/>
            <person name="Weatherly B."/>
            <person name="Jiang L."/>
            <person name="Schumacher K."/>
            <person name="Hicks G."/>
            <person name="Raikhel N."/>
        </authorList>
    </citation>
    <scope>FUNCTION</scope>
    <scope>SUBUNIT</scope>
    <scope>SUBCELLULAR LOCATION</scope>
    <source>
        <strain>cv. Columbia</strain>
    </source>
</reference>
<reference key="10">
    <citation type="journal article" date="2013" name="Plant Cell">
        <title>Trans-Golgi network localized ECHIDNA/Ypt interacting protein complex is required for the secretion of cell wall polysaccharides in Arabidopsis.</title>
        <authorList>
            <person name="Gendre D."/>
            <person name="McFarlane H.E."/>
            <person name="Johnson E."/>
            <person name="Mouille G."/>
            <person name="Sjoedin A."/>
            <person name="Oh J."/>
            <person name="Levesque-Tremblay G."/>
            <person name="Watanabe Y."/>
            <person name="Samuels L."/>
            <person name="Bhalerao R.P."/>
        </authorList>
    </citation>
    <scope>SUBCELLULAR LOCATION</scope>
    <source>
        <strain>cv. Columbia</strain>
    </source>
</reference>
<reference key="11">
    <citation type="journal article" date="2014" name="Plant Cell">
        <title>Arabidopsis SNAREs SYP61 and SYP121 coordinate the trafficking of plasma membrane aquaporin PIP2;7 to modulate the cell membrane water permeability.</title>
        <authorList>
            <person name="Hachez C."/>
            <person name="Laloux T."/>
            <person name="Reinhardt H."/>
            <person name="Cavez D."/>
            <person name="Degand H."/>
            <person name="Grefen C."/>
            <person name="De Rycke R."/>
            <person name="Inze D."/>
            <person name="Blatt M.R."/>
            <person name="Russinova E."/>
            <person name="Chaumont F."/>
        </authorList>
    </citation>
    <scope>FUNCTION</scope>
    <scope>DISRUPTION PHENOTYPE</scope>
    <scope>INTERACTION WITH SYP121 AND PIP2-7</scope>
    <scope>SUBCELLULAR LOCATION</scope>
</reference>
<reference key="12">
    <citation type="journal article" date="2015" name="Plant Physiol.">
        <title>CESA TRAFFICKING INHIBITOR inhibits cellulose deposition and interferes with the trafficking of cellulose synthase complexes and their associated proteins KORRIGAN1 and POM2/CELLULOSE SYNTHASE INTERACTIVE PROTEIN1.</title>
        <authorList>
            <person name="Worden N."/>
            <person name="Wilkop T.E."/>
            <person name="Esteve V.E."/>
            <person name="Jeannotte R."/>
            <person name="Lathe R."/>
            <person name="Vernhettes S."/>
            <person name="Weimer B."/>
            <person name="Hicks G."/>
            <person name="Alonso J."/>
            <person name="Labavitch J."/>
            <person name="Persson S."/>
            <person name="Ehrhardt D."/>
            <person name="Drakakaki G."/>
        </authorList>
    </citation>
    <scope>FUNCTION</scope>
</reference>
<proteinExistence type="evidence at protein level"/>
<gene>
    <name evidence="12" type="primary">SYP61</name>
    <name evidence="13" type="synonym">OSM1</name>
    <name evidence="15" type="ordered locus">At1g28490</name>
    <name evidence="16" type="ORF">F3M18.7</name>
</gene>
<evidence type="ECO:0000255" key="1"/>
<evidence type="ECO:0000255" key="2">
    <source>
        <dbReference type="PROSITE-ProRule" id="PRU00202"/>
    </source>
</evidence>
<evidence type="ECO:0000269" key="3">
    <source>
    </source>
</evidence>
<evidence type="ECO:0000269" key="4">
    <source>
    </source>
</evidence>
<evidence type="ECO:0000269" key="5">
    <source>
    </source>
</evidence>
<evidence type="ECO:0000269" key="6">
    <source>
    </source>
</evidence>
<evidence type="ECO:0000269" key="7">
    <source>
    </source>
</evidence>
<evidence type="ECO:0000269" key="8">
    <source>
    </source>
</evidence>
<evidence type="ECO:0000269" key="9">
    <source>
    </source>
</evidence>
<evidence type="ECO:0000269" key="10">
    <source>
    </source>
</evidence>
<evidence type="ECO:0000269" key="11">
    <source>
    </source>
</evidence>
<evidence type="ECO:0000303" key="12">
    <source>
    </source>
</evidence>
<evidence type="ECO:0000303" key="13">
    <source>
    </source>
</evidence>
<evidence type="ECO:0000305" key="14"/>
<evidence type="ECO:0000312" key="15">
    <source>
        <dbReference type="Araport" id="AT1G28490"/>
    </source>
</evidence>
<evidence type="ECO:0000312" key="16">
    <source>
        <dbReference type="EMBL" id="AAF16768.1"/>
    </source>
</evidence>
<accession>Q946Y7</accession>
<accession>Q8VYF3</accession>
<accession>Q9SGP7</accession>